<keyword id="KW-0687">Ribonucleoprotein</keyword>
<keyword id="KW-0689">Ribosomal protein</keyword>
<keyword id="KW-0694">RNA-binding</keyword>
<keyword id="KW-0699">rRNA-binding</keyword>
<organism>
    <name type="scientific">Desulfitobacterium hafniense (strain DSM 10664 / DCB-2)</name>
    <dbReference type="NCBI Taxonomy" id="272564"/>
    <lineage>
        <taxon>Bacteria</taxon>
        <taxon>Bacillati</taxon>
        <taxon>Bacillota</taxon>
        <taxon>Clostridia</taxon>
        <taxon>Eubacteriales</taxon>
        <taxon>Desulfitobacteriaceae</taxon>
        <taxon>Desulfitobacterium</taxon>
    </lineage>
</organism>
<evidence type="ECO:0000255" key="1">
    <source>
        <dbReference type="HAMAP-Rule" id="MF_01331"/>
    </source>
</evidence>
<evidence type="ECO:0000305" key="2"/>
<reference key="1">
    <citation type="journal article" date="2012" name="BMC Microbiol.">
        <title>Genome sequence of Desulfitobacterium hafniense DCB-2, a Gram-positive anaerobe capable of dehalogenation and metal reduction.</title>
        <authorList>
            <person name="Kim S.H."/>
            <person name="Harzman C."/>
            <person name="Davis J.K."/>
            <person name="Hutcheson R."/>
            <person name="Broderick J.B."/>
            <person name="Marsh T.L."/>
            <person name="Tiedje J.M."/>
        </authorList>
    </citation>
    <scope>NUCLEOTIDE SEQUENCE [LARGE SCALE GENOMIC DNA]</scope>
    <source>
        <strain>DSM 10664 / DCB-2</strain>
    </source>
</reference>
<protein>
    <recommendedName>
        <fullName evidence="1">Large ribosomal subunit protein uL22</fullName>
    </recommendedName>
    <alternativeName>
        <fullName evidence="2">50S ribosomal protein L22</fullName>
    </alternativeName>
</protein>
<gene>
    <name evidence="1" type="primary">rplV</name>
    <name type="ordered locus">Dhaf_0427</name>
</gene>
<feature type="chain" id="PRO_1000166058" description="Large ribosomal subunit protein uL22">
    <location>
        <begin position="1"/>
        <end position="114"/>
    </location>
</feature>
<sequence>MQQAKAIARYVRISPRKVRQVVDLIRGKNVSDALAILQFTPKGATEPVTKVLNSAVANAEHNYDMDTDALIVKEIYVDEGPTLKRIKPRAMGRADQIRKRTSHITVVVVEKKEG</sequence>
<proteinExistence type="inferred from homology"/>
<name>RL22_DESHD</name>
<dbReference type="EMBL" id="CP001336">
    <property type="protein sequence ID" value="ACL18494.1"/>
    <property type="molecule type" value="Genomic_DNA"/>
</dbReference>
<dbReference type="RefSeq" id="WP_015942758.1">
    <property type="nucleotide sequence ID" value="NC_011830.1"/>
</dbReference>
<dbReference type="SMR" id="B8G1X1"/>
<dbReference type="KEGG" id="dhd:Dhaf_0427"/>
<dbReference type="HOGENOM" id="CLU_083987_3_3_9"/>
<dbReference type="Proteomes" id="UP000007726">
    <property type="component" value="Chromosome"/>
</dbReference>
<dbReference type="GO" id="GO:0022625">
    <property type="term" value="C:cytosolic large ribosomal subunit"/>
    <property type="evidence" value="ECO:0007669"/>
    <property type="project" value="TreeGrafter"/>
</dbReference>
<dbReference type="GO" id="GO:0019843">
    <property type="term" value="F:rRNA binding"/>
    <property type="evidence" value="ECO:0007669"/>
    <property type="project" value="UniProtKB-UniRule"/>
</dbReference>
<dbReference type="GO" id="GO:0003735">
    <property type="term" value="F:structural constituent of ribosome"/>
    <property type="evidence" value="ECO:0007669"/>
    <property type="project" value="InterPro"/>
</dbReference>
<dbReference type="GO" id="GO:0006412">
    <property type="term" value="P:translation"/>
    <property type="evidence" value="ECO:0007669"/>
    <property type="project" value="UniProtKB-UniRule"/>
</dbReference>
<dbReference type="CDD" id="cd00336">
    <property type="entry name" value="Ribosomal_L22"/>
    <property type="match status" value="1"/>
</dbReference>
<dbReference type="FunFam" id="3.90.470.10:FF:000011">
    <property type="entry name" value="50S ribosomal protein L22"/>
    <property type="match status" value="1"/>
</dbReference>
<dbReference type="Gene3D" id="3.90.470.10">
    <property type="entry name" value="Ribosomal protein L22/L17"/>
    <property type="match status" value="1"/>
</dbReference>
<dbReference type="HAMAP" id="MF_01331_B">
    <property type="entry name" value="Ribosomal_uL22_B"/>
    <property type="match status" value="1"/>
</dbReference>
<dbReference type="InterPro" id="IPR001063">
    <property type="entry name" value="Ribosomal_uL22"/>
</dbReference>
<dbReference type="InterPro" id="IPR005727">
    <property type="entry name" value="Ribosomal_uL22_bac/chlpt-type"/>
</dbReference>
<dbReference type="InterPro" id="IPR047867">
    <property type="entry name" value="Ribosomal_uL22_bac/org-type"/>
</dbReference>
<dbReference type="InterPro" id="IPR018260">
    <property type="entry name" value="Ribosomal_uL22_CS"/>
</dbReference>
<dbReference type="InterPro" id="IPR036394">
    <property type="entry name" value="Ribosomal_uL22_sf"/>
</dbReference>
<dbReference type="NCBIfam" id="TIGR01044">
    <property type="entry name" value="rplV_bact"/>
    <property type="match status" value="1"/>
</dbReference>
<dbReference type="PANTHER" id="PTHR13501">
    <property type="entry name" value="CHLOROPLAST 50S RIBOSOMAL PROTEIN L22-RELATED"/>
    <property type="match status" value="1"/>
</dbReference>
<dbReference type="PANTHER" id="PTHR13501:SF8">
    <property type="entry name" value="LARGE RIBOSOMAL SUBUNIT PROTEIN UL22M"/>
    <property type="match status" value="1"/>
</dbReference>
<dbReference type="Pfam" id="PF00237">
    <property type="entry name" value="Ribosomal_L22"/>
    <property type="match status" value="1"/>
</dbReference>
<dbReference type="SUPFAM" id="SSF54843">
    <property type="entry name" value="Ribosomal protein L22"/>
    <property type="match status" value="1"/>
</dbReference>
<dbReference type="PROSITE" id="PS00464">
    <property type="entry name" value="RIBOSOMAL_L22"/>
    <property type="match status" value="1"/>
</dbReference>
<comment type="function">
    <text evidence="1">This protein binds specifically to 23S rRNA; its binding is stimulated by other ribosomal proteins, e.g. L4, L17, and L20. It is important during the early stages of 50S assembly. It makes multiple contacts with different domains of the 23S rRNA in the assembled 50S subunit and ribosome (By similarity).</text>
</comment>
<comment type="function">
    <text evidence="1">The globular domain of the protein is located near the polypeptide exit tunnel on the outside of the subunit, while an extended beta-hairpin is found that lines the wall of the exit tunnel in the center of the 70S ribosome.</text>
</comment>
<comment type="subunit">
    <text evidence="1">Part of the 50S ribosomal subunit.</text>
</comment>
<comment type="similarity">
    <text evidence="1">Belongs to the universal ribosomal protein uL22 family.</text>
</comment>
<accession>B8G1X1</accession>